<organism>
    <name type="scientific">Clostridium botulinum (strain Loch Maree / Type A3)</name>
    <dbReference type="NCBI Taxonomy" id="498214"/>
    <lineage>
        <taxon>Bacteria</taxon>
        <taxon>Bacillati</taxon>
        <taxon>Bacillota</taxon>
        <taxon>Clostridia</taxon>
        <taxon>Eubacteriales</taxon>
        <taxon>Clostridiaceae</taxon>
        <taxon>Clostridium</taxon>
    </lineage>
</organism>
<keyword id="KW-0687">Ribonucleoprotein</keyword>
<keyword id="KW-0689">Ribosomal protein</keyword>
<keyword id="KW-0694">RNA-binding</keyword>
<keyword id="KW-0699">rRNA-binding</keyword>
<sequence>MERSNRKTRIGRVVSNKMDKTIVVAVETKVRHPLYGKIMNRTTKFKAHDENNAANINDKVLIMETRPLSKQKRWRLVEVVEKAK</sequence>
<protein>
    <recommendedName>
        <fullName evidence="1">Small ribosomal subunit protein uS17</fullName>
    </recommendedName>
    <alternativeName>
        <fullName evidence="2">30S ribosomal protein S17</fullName>
    </alternativeName>
</protein>
<name>RS17_CLOBM</name>
<gene>
    <name evidence="1" type="primary">rpsQ</name>
    <name type="ordered locus">CLK_2915</name>
</gene>
<reference key="1">
    <citation type="journal article" date="2007" name="PLoS ONE">
        <title>Analysis of the neurotoxin complex genes in Clostridium botulinum A1-A4 and B1 strains: BoNT/A3, /Ba4 and /B1 clusters are located within plasmids.</title>
        <authorList>
            <person name="Smith T.J."/>
            <person name="Hill K.K."/>
            <person name="Foley B.T."/>
            <person name="Detter J.C."/>
            <person name="Munk A.C."/>
            <person name="Bruce D.C."/>
            <person name="Doggett N.A."/>
            <person name="Smith L.A."/>
            <person name="Marks J.D."/>
            <person name="Xie G."/>
            <person name="Brettin T.S."/>
        </authorList>
    </citation>
    <scope>NUCLEOTIDE SEQUENCE [LARGE SCALE GENOMIC DNA]</scope>
    <source>
        <strain>Loch Maree / Type A3</strain>
    </source>
</reference>
<dbReference type="EMBL" id="CP000962">
    <property type="protein sequence ID" value="ACA54051.1"/>
    <property type="molecule type" value="Genomic_DNA"/>
</dbReference>
<dbReference type="RefSeq" id="WP_003357552.1">
    <property type="nucleotide sequence ID" value="NC_010520.1"/>
</dbReference>
<dbReference type="SMR" id="B1KSL6"/>
<dbReference type="GeneID" id="5186963"/>
<dbReference type="KEGG" id="cbl:CLK_2915"/>
<dbReference type="HOGENOM" id="CLU_073626_1_0_9"/>
<dbReference type="GO" id="GO:0022627">
    <property type="term" value="C:cytosolic small ribosomal subunit"/>
    <property type="evidence" value="ECO:0007669"/>
    <property type="project" value="TreeGrafter"/>
</dbReference>
<dbReference type="GO" id="GO:0019843">
    <property type="term" value="F:rRNA binding"/>
    <property type="evidence" value="ECO:0007669"/>
    <property type="project" value="UniProtKB-UniRule"/>
</dbReference>
<dbReference type="GO" id="GO:0003735">
    <property type="term" value="F:structural constituent of ribosome"/>
    <property type="evidence" value="ECO:0007669"/>
    <property type="project" value="InterPro"/>
</dbReference>
<dbReference type="GO" id="GO:0006412">
    <property type="term" value="P:translation"/>
    <property type="evidence" value="ECO:0007669"/>
    <property type="project" value="UniProtKB-UniRule"/>
</dbReference>
<dbReference type="CDD" id="cd00364">
    <property type="entry name" value="Ribosomal_uS17"/>
    <property type="match status" value="1"/>
</dbReference>
<dbReference type="FunFam" id="2.40.50.140:FF:000026">
    <property type="entry name" value="30S ribosomal protein S17"/>
    <property type="match status" value="1"/>
</dbReference>
<dbReference type="Gene3D" id="2.40.50.140">
    <property type="entry name" value="Nucleic acid-binding proteins"/>
    <property type="match status" value="1"/>
</dbReference>
<dbReference type="HAMAP" id="MF_01345_B">
    <property type="entry name" value="Ribosomal_uS17_B"/>
    <property type="match status" value="1"/>
</dbReference>
<dbReference type="InterPro" id="IPR012340">
    <property type="entry name" value="NA-bd_OB-fold"/>
</dbReference>
<dbReference type="InterPro" id="IPR000266">
    <property type="entry name" value="Ribosomal_uS17"/>
</dbReference>
<dbReference type="InterPro" id="IPR019984">
    <property type="entry name" value="Ribosomal_uS17_bact/chlr"/>
</dbReference>
<dbReference type="NCBIfam" id="NF004123">
    <property type="entry name" value="PRK05610.1"/>
    <property type="match status" value="1"/>
</dbReference>
<dbReference type="NCBIfam" id="TIGR03635">
    <property type="entry name" value="uS17_bact"/>
    <property type="match status" value="1"/>
</dbReference>
<dbReference type="PANTHER" id="PTHR10744">
    <property type="entry name" value="40S RIBOSOMAL PROTEIN S11 FAMILY MEMBER"/>
    <property type="match status" value="1"/>
</dbReference>
<dbReference type="PANTHER" id="PTHR10744:SF1">
    <property type="entry name" value="SMALL RIBOSOMAL SUBUNIT PROTEIN US17M"/>
    <property type="match status" value="1"/>
</dbReference>
<dbReference type="Pfam" id="PF00366">
    <property type="entry name" value="Ribosomal_S17"/>
    <property type="match status" value="1"/>
</dbReference>
<dbReference type="PRINTS" id="PR00973">
    <property type="entry name" value="RIBOSOMALS17"/>
</dbReference>
<dbReference type="SUPFAM" id="SSF50249">
    <property type="entry name" value="Nucleic acid-binding proteins"/>
    <property type="match status" value="1"/>
</dbReference>
<accession>B1KSL6</accession>
<evidence type="ECO:0000255" key="1">
    <source>
        <dbReference type="HAMAP-Rule" id="MF_01345"/>
    </source>
</evidence>
<evidence type="ECO:0000305" key="2"/>
<comment type="function">
    <text evidence="1">One of the primary rRNA binding proteins, it binds specifically to the 5'-end of 16S ribosomal RNA.</text>
</comment>
<comment type="subunit">
    <text evidence="1">Part of the 30S ribosomal subunit.</text>
</comment>
<comment type="similarity">
    <text evidence="1">Belongs to the universal ribosomal protein uS17 family.</text>
</comment>
<proteinExistence type="inferred from homology"/>
<feature type="chain" id="PRO_1000143243" description="Small ribosomal subunit protein uS17">
    <location>
        <begin position="1"/>
        <end position="84"/>
    </location>
</feature>